<proteinExistence type="inferred from homology"/>
<dbReference type="EC" id="7.4.2.8" evidence="1"/>
<dbReference type="EMBL" id="CP000485">
    <property type="protein sequence ID" value="ABK87870.1"/>
    <property type="molecule type" value="Genomic_DNA"/>
</dbReference>
<dbReference type="SMR" id="A0RKX7"/>
<dbReference type="KEGG" id="btl:BALH_4684"/>
<dbReference type="HOGENOM" id="CLU_005314_3_0_9"/>
<dbReference type="GO" id="GO:0031522">
    <property type="term" value="C:cell envelope Sec protein transport complex"/>
    <property type="evidence" value="ECO:0007669"/>
    <property type="project" value="TreeGrafter"/>
</dbReference>
<dbReference type="GO" id="GO:0005829">
    <property type="term" value="C:cytosol"/>
    <property type="evidence" value="ECO:0007669"/>
    <property type="project" value="TreeGrafter"/>
</dbReference>
<dbReference type="GO" id="GO:0005886">
    <property type="term" value="C:plasma membrane"/>
    <property type="evidence" value="ECO:0007669"/>
    <property type="project" value="UniProtKB-SubCell"/>
</dbReference>
<dbReference type="GO" id="GO:0005524">
    <property type="term" value="F:ATP binding"/>
    <property type="evidence" value="ECO:0007669"/>
    <property type="project" value="UniProtKB-UniRule"/>
</dbReference>
<dbReference type="GO" id="GO:0046872">
    <property type="term" value="F:metal ion binding"/>
    <property type="evidence" value="ECO:0007669"/>
    <property type="project" value="UniProtKB-KW"/>
</dbReference>
<dbReference type="GO" id="GO:0008564">
    <property type="term" value="F:protein-exporting ATPase activity"/>
    <property type="evidence" value="ECO:0007669"/>
    <property type="project" value="UniProtKB-EC"/>
</dbReference>
<dbReference type="GO" id="GO:0065002">
    <property type="term" value="P:intracellular protein transmembrane transport"/>
    <property type="evidence" value="ECO:0007669"/>
    <property type="project" value="UniProtKB-UniRule"/>
</dbReference>
<dbReference type="GO" id="GO:0017038">
    <property type="term" value="P:protein import"/>
    <property type="evidence" value="ECO:0007669"/>
    <property type="project" value="InterPro"/>
</dbReference>
<dbReference type="GO" id="GO:0006605">
    <property type="term" value="P:protein targeting"/>
    <property type="evidence" value="ECO:0007669"/>
    <property type="project" value="UniProtKB-UniRule"/>
</dbReference>
<dbReference type="GO" id="GO:0043952">
    <property type="term" value="P:protein transport by the Sec complex"/>
    <property type="evidence" value="ECO:0007669"/>
    <property type="project" value="TreeGrafter"/>
</dbReference>
<dbReference type="CDD" id="cd17928">
    <property type="entry name" value="DEXDc_SecA"/>
    <property type="match status" value="1"/>
</dbReference>
<dbReference type="CDD" id="cd18803">
    <property type="entry name" value="SF2_C_secA"/>
    <property type="match status" value="1"/>
</dbReference>
<dbReference type="FunFam" id="1.10.3060.10:FF:000002">
    <property type="entry name" value="Preprotein translocase subunit SecA"/>
    <property type="match status" value="1"/>
</dbReference>
<dbReference type="FunFam" id="3.40.50.300:FF:000081">
    <property type="entry name" value="Preprotein translocase subunit SecA"/>
    <property type="match status" value="1"/>
</dbReference>
<dbReference type="FunFam" id="3.40.50.300:FF:000429">
    <property type="entry name" value="Preprotein translocase subunit SecA"/>
    <property type="match status" value="1"/>
</dbReference>
<dbReference type="FunFam" id="3.90.1440.10:FF:000001">
    <property type="entry name" value="Preprotein translocase subunit SecA"/>
    <property type="match status" value="1"/>
</dbReference>
<dbReference type="Gene3D" id="1.10.3060.10">
    <property type="entry name" value="Helical scaffold and wing domains of SecA"/>
    <property type="match status" value="1"/>
</dbReference>
<dbReference type="Gene3D" id="3.40.50.300">
    <property type="entry name" value="P-loop containing nucleotide triphosphate hydrolases"/>
    <property type="match status" value="3"/>
</dbReference>
<dbReference type="Gene3D" id="3.90.1440.10">
    <property type="entry name" value="SecA, preprotein cross-linking domain"/>
    <property type="match status" value="1"/>
</dbReference>
<dbReference type="HAMAP" id="MF_01382">
    <property type="entry name" value="SecA"/>
    <property type="match status" value="1"/>
</dbReference>
<dbReference type="InterPro" id="IPR014001">
    <property type="entry name" value="Helicase_ATP-bd"/>
</dbReference>
<dbReference type="InterPro" id="IPR001650">
    <property type="entry name" value="Helicase_C-like"/>
</dbReference>
<dbReference type="InterPro" id="IPR027417">
    <property type="entry name" value="P-loop_NTPase"/>
</dbReference>
<dbReference type="InterPro" id="IPR004027">
    <property type="entry name" value="SEC_C_motif"/>
</dbReference>
<dbReference type="InterPro" id="IPR000185">
    <property type="entry name" value="SecA"/>
</dbReference>
<dbReference type="InterPro" id="IPR020937">
    <property type="entry name" value="SecA_CS"/>
</dbReference>
<dbReference type="InterPro" id="IPR011115">
    <property type="entry name" value="SecA_DEAD"/>
</dbReference>
<dbReference type="InterPro" id="IPR014018">
    <property type="entry name" value="SecA_motor_DEAD"/>
</dbReference>
<dbReference type="InterPro" id="IPR011130">
    <property type="entry name" value="SecA_preprotein_X-link_dom"/>
</dbReference>
<dbReference type="InterPro" id="IPR044722">
    <property type="entry name" value="SecA_SF2_C"/>
</dbReference>
<dbReference type="InterPro" id="IPR011116">
    <property type="entry name" value="SecA_Wing/Scaffold"/>
</dbReference>
<dbReference type="InterPro" id="IPR036266">
    <property type="entry name" value="SecA_Wing/Scaffold_sf"/>
</dbReference>
<dbReference type="InterPro" id="IPR036670">
    <property type="entry name" value="SecA_X-link_sf"/>
</dbReference>
<dbReference type="NCBIfam" id="NF006630">
    <property type="entry name" value="PRK09200.1"/>
    <property type="match status" value="1"/>
</dbReference>
<dbReference type="NCBIfam" id="NF009538">
    <property type="entry name" value="PRK12904.1"/>
    <property type="match status" value="1"/>
</dbReference>
<dbReference type="NCBIfam" id="TIGR00963">
    <property type="entry name" value="secA"/>
    <property type="match status" value="1"/>
</dbReference>
<dbReference type="PANTHER" id="PTHR30612:SF0">
    <property type="entry name" value="CHLOROPLAST PROTEIN-TRANSPORTING ATPASE"/>
    <property type="match status" value="1"/>
</dbReference>
<dbReference type="PANTHER" id="PTHR30612">
    <property type="entry name" value="SECA INNER MEMBRANE COMPONENT OF SEC PROTEIN SECRETION SYSTEM"/>
    <property type="match status" value="1"/>
</dbReference>
<dbReference type="Pfam" id="PF21090">
    <property type="entry name" value="P-loop_SecA"/>
    <property type="match status" value="2"/>
</dbReference>
<dbReference type="Pfam" id="PF02810">
    <property type="entry name" value="SEC-C"/>
    <property type="match status" value="1"/>
</dbReference>
<dbReference type="Pfam" id="PF07517">
    <property type="entry name" value="SecA_DEAD"/>
    <property type="match status" value="1"/>
</dbReference>
<dbReference type="Pfam" id="PF01043">
    <property type="entry name" value="SecA_PP_bind"/>
    <property type="match status" value="1"/>
</dbReference>
<dbReference type="Pfam" id="PF07516">
    <property type="entry name" value="SecA_SW"/>
    <property type="match status" value="1"/>
</dbReference>
<dbReference type="PRINTS" id="PR00906">
    <property type="entry name" value="SECA"/>
</dbReference>
<dbReference type="SMART" id="SM00957">
    <property type="entry name" value="SecA_DEAD"/>
    <property type="match status" value="1"/>
</dbReference>
<dbReference type="SMART" id="SM00958">
    <property type="entry name" value="SecA_PP_bind"/>
    <property type="match status" value="1"/>
</dbReference>
<dbReference type="SUPFAM" id="SSF81886">
    <property type="entry name" value="Helical scaffold and wing domains of SecA"/>
    <property type="match status" value="1"/>
</dbReference>
<dbReference type="SUPFAM" id="SSF52540">
    <property type="entry name" value="P-loop containing nucleoside triphosphate hydrolases"/>
    <property type="match status" value="2"/>
</dbReference>
<dbReference type="SUPFAM" id="SSF81767">
    <property type="entry name" value="Pre-protein crosslinking domain of SecA"/>
    <property type="match status" value="1"/>
</dbReference>
<dbReference type="PROSITE" id="PS01312">
    <property type="entry name" value="SECA"/>
    <property type="match status" value="1"/>
</dbReference>
<dbReference type="PROSITE" id="PS51196">
    <property type="entry name" value="SECA_MOTOR_DEAD"/>
    <property type="match status" value="1"/>
</dbReference>
<name>SECA1_BACAH</name>
<feature type="chain" id="PRO_0000318320" description="Protein translocase subunit SecA 1">
    <location>
        <begin position="1"/>
        <end position="835"/>
    </location>
</feature>
<feature type="region of interest" description="Disordered" evidence="2">
    <location>
        <begin position="788"/>
        <end position="807"/>
    </location>
</feature>
<feature type="binding site" evidence="1">
    <location>
        <position position="85"/>
    </location>
    <ligand>
        <name>ATP</name>
        <dbReference type="ChEBI" id="CHEBI:30616"/>
    </ligand>
</feature>
<feature type="binding site" evidence="1">
    <location>
        <begin position="103"/>
        <end position="107"/>
    </location>
    <ligand>
        <name>ATP</name>
        <dbReference type="ChEBI" id="CHEBI:30616"/>
    </ligand>
</feature>
<feature type="binding site" evidence="1">
    <location>
        <position position="492"/>
    </location>
    <ligand>
        <name>ATP</name>
        <dbReference type="ChEBI" id="CHEBI:30616"/>
    </ligand>
</feature>
<feature type="binding site" evidence="1">
    <location>
        <position position="819"/>
    </location>
    <ligand>
        <name>Zn(2+)</name>
        <dbReference type="ChEBI" id="CHEBI:29105"/>
    </ligand>
</feature>
<feature type="binding site" evidence="1">
    <location>
        <position position="821"/>
    </location>
    <ligand>
        <name>Zn(2+)</name>
        <dbReference type="ChEBI" id="CHEBI:29105"/>
    </ligand>
</feature>
<feature type="binding site" evidence="1">
    <location>
        <position position="830"/>
    </location>
    <ligand>
        <name>Zn(2+)</name>
        <dbReference type="ChEBI" id="CHEBI:29105"/>
    </ligand>
</feature>
<feature type="binding site" evidence="1">
    <location>
        <position position="831"/>
    </location>
    <ligand>
        <name>Zn(2+)</name>
        <dbReference type="ChEBI" id="CHEBI:29105"/>
    </ligand>
</feature>
<accession>A0RKX7</accession>
<protein>
    <recommendedName>
        <fullName evidence="1">Protein translocase subunit SecA 1</fullName>
        <ecNumber evidence="1">7.4.2.8</ecNumber>
    </recommendedName>
</protein>
<reference key="1">
    <citation type="journal article" date="2007" name="J. Bacteriol.">
        <title>The complete genome sequence of Bacillus thuringiensis Al Hakam.</title>
        <authorList>
            <person name="Challacombe J.F."/>
            <person name="Altherr M.R."/>
            <person name="Xie G."/>
            <person name="Bhotika S.S."/>
            <person name="Brown N."/>
            <person name="Bruce D."/>
            <person name="Campbell C.S."/>
            <person name="Campbell M.L."/>
            <person name="Chen J."/>
            <person name="Chertkov O."/>
            <person name="Cleland C."/>
            <person name="Dimitrijevic M."/>
            <person name="Doggett N.A."/>
            <person name="Fawcett J.J."/>
            <person name="Glavina T."/>
            <person name="Goodwin L.A."/>
            <person name="Green L.D."/>
            <person name="Han C.S."/>
            <person name="Hill K.K."/>
            <person name="Hitchcock P."/>
            <person name="Jackson P.J."/>
            <person name="Keim P."/>
            <person name="Kewalramani A.R."/>
            <person name="Longmire J."/>
            <person name="Lucas S."/>
            <person name="Malfatti S."/>
            <person name="Martinez D."/>
            <person name="McMurry K."/>
            <person name="Meincke L.J."/>
            <person name="Misra M."/>
            <person name="Moseman B.L."/>
            <person name="Mundt M."/>
            <person name="Munk A.C."/>
            <person name="Okinaka R.T."/>
            <person name="Parson-Quintana B."/>
            <person name="Reilly L.P."/>
            <person name="Richardson P."/>
            <person name="Robinson D.L."/>
            <person name="Saunders E."/>
            <person name="Tapia R."/>
            <person name="Tesmer J.G."/>
            <person name="Thayer N."/>
            <person name="Thompson L.S."/>
            <person name="Tice H."/>
            <person name="Ticknor L.O."/>
            <person name="Wills P.L."/>
            <person name="Gilna P."/>
            <person name="Brettin T.S."/>
        </authorList>
    </citation>
    <scope>NUCLEOTIDE SEQUENCE [LARGE SCALE GENOMIC DNA]</scope>
    <source>
        <strain>Al Hakam</strain>
    </source>
</reference>
<comment type="function">
    <text evidence="1">Part of the Sec protein translocase complex. Interacts with the SecYEG preprotein conducting channel. Has a central role in coupling the hydrolysis of ATP to the transfer of proteins into and across the cell membrane, serving as an ATP-driven molecular motor driving the stepwise translocation of polypeptide chains across the membrane.</text>
</comment>
<comment type="catalytic activity">
    <reaction evidence="1">
        <text>ATP + H2O + cellular proteinSide 1 = ADP + phosphate + cellular proteinSide 2.</text>
        <dbReference type="EC" id="7.4.2.8"/>
    </reaction>
</comment>
<comment type="cofactor">
    <cofactor evidence="1">
        <name>Zn(2+)</name>
        <dbReference type="ChEBI" id="CHEBI:29105"/>
    </cofactor>
    <text evidence="1">May bind 1 zinc ion per subunit.</text>
</comment>
<comment type="subunit">
    <text evidence="1">Monomer and homodimer. Part of the essential Sec protein translocation apparatus which comprises SecA, SecYEG and auxiliary proteins SecDF. Other proteins may also be involved.</text>
</comment>
<comment type="subcellular location">
    <subcellularLocation>
        <location evidence="1">Cell membrane</location>
        <topology evidence="1">Peripheral membrane protein</topology>
        <orientation evidence="1">Cytoplasmic side</orientation>
    </subcellularLocation>
    <subcellularLocation>
        <location evidence="1">Cytoplasm</location>
    </subcellularLocation>
    <text evidence="1">Distribution is 50-50.</text>
</comment>
<comment type="similarity">
    <text evidence="1">Belongs to the SecA family.</text>
</comment>
<keyword id="KW-0067">ATP-binding</keyword>
<keyword id="KW-1003">Cell membrane</keyword>
<keyword id="KW-0963">Cytoplasm</keyword>
<keyword id="KW-0472">Membrane</keyword>
<keyword id="KW-0479">Metal-binding</keyword>
<keyword id="KW-0547">Nucleotide-binding</keyword>
<keyword id="KW-0653">Protein transport</keyword>
<keyword id="KW-1278">Translocase</keyword>
<keyword id="KW-0811">Translocation</keyword>
<keyword id="KW-0813">Transport</keyword>
<keyword id="KW-0862">Zinc</keyword>
<sequence>MIGILKKVFDVNQRQIKRMQKTVEQIDALESSIKPLTDEQLKGKTLEFKERLTKGETVDDLLPEAFAVVREAATRVLGMRPYGVQLMGGIALHEGNISEMKTGEGKTLTSTLPVYLNALTGKGVHVVTVNEYLAQRDASEMGQLHEFLGLTVGINLNSMSREEKQEAYAADITYSTNNELGFDYLRDNMVLYKEQCVQRPLHFAIIDEVDSILVDEARTPLIISGQAQKSTELYMFANAFVRTLENEKDYSFDVKTKNVMLTEDGITKAEKAFHIENLFDLKHVALLHHINQALRAHVVMHRDTDYVVQEGEIVIVDQFTGRLMKGRRYSEGLHQAIEAKEGVEIQNESMTLATITFQNYFRMYEKLSGMTGTAKTEEEEFRNIYNMNVIVIPTNKPIIRDDRADLIFKSMEGKFNAVVEDIVNRHKQGQPVLVGTVAIETSELISKMLTRKGVRHNILNAKNHAREADIIAEAGMKGAVTIATNMAGRGTDIKLGDDIKNIGLAVIGTERHESRRIDNQLRGRAGRQGDPGVTQFYLSMEDELMRRFGSDNMKAMMDRLGMDDSQPIESKMVSRAVESAQKRVEGNNYDARKQLLQYDDVLRQQREVIYKQRQEVMESENLRGIIEGMMKSTVERAVALHTQEEIEEDWNIKGLVDYLNTNLLQEGDVKEEELRRLAPEEMSEPIIAKLIERYNDKEKLMPEEQMREFEKVVVFRVVDTKWTEHIDAMDHLREGIHLRAYGQIDPLREYQMEGFAMFESMIASIEEEISRYIMKAEIEQNLERQEVVQGEAVHPSSDGEEAKKKPVVKGDQVGRNDLCKCGSGKKYKNCCGIGK</sequence>
<evidence type="ECO:0000255" key="1">
    <source>
        <dbReference type="HAMAP-Rule" id="MF_01382"/>
    </source>
</evidence>
<evidence type="ECO:0000256" key="2">
    <source>
        <dbReference type="SAM" id="MobiDB-lite"/>
    </source>
</evidence>
<organism>
    <name type="scientific">Bacillus thuringiensis (strain Al Hakam)</name>
    <dbReference type="NCBI Taxonomy" id="412694"/>
    <lineage>
        <taxon>Bacteria</taxon>
        <taxon>Bacillati</taxon>
        <taxon>Bacillota</taxon>
        <taxon>Bacilli</taxon>
        <taxon>Bacillales</taxon>
        <taxon>Bacillaceae</taxon>
        <taxon>Bacillus</taxon>
        <taxon>Bacillus cereus group</taxon>
    </lineage>
</organism>
<gene>
    <name evidence="1" type="primary">secA1</name>
    <name type="ordered locus">BALH_4684</name>
</gene>